<sequence length="410" mass="45351">MDLTGLLLDEEGTFSLAGFQDFTFLPGHQKLSARIRRRLYYGWDWEADCSLEELSSPVADIAVELLQKAAPSPIRRLQKKYVAHVSREACISPCAMMLALVYIERLRHRNPDYLQHVSSSDLFLISMMVASKYLYDEGEEEEVFNDEWGAAGGVAVPTLNALERGFLSAMDWHLYTDPREIFEVLSWLESCVAEQQGRRRGWYTYTDLCVLLEQPTWQLALGSLCQRLVKLSCLLAVAYVSSVALAVASVAVIHQSLGLSCTPTPGPPDLGLTSRCLLEPCIPSVPQCLPSPANVSSCLEGSTGLRSLWGSLLASLTPPPLPPPDPPAPPTPFHNCHLCQKLQRDSPTCHACHHPNRTAPTALSSPWYHTYGLAPPWPWSPVPASIPQPQQCSLFSIMELARLKSFIFPG</sequence>
<gene>
    <name type="primary">CNPPD1</name>
</gene>
<keyword id="KW-0472">Membrane</keyword>
<keyword id="KW-1185">Reference proteome</keyword>
<keyword id="KW-0812">Transmembrane</keyword>
<keyword id="KW-1133">Transmembrane helix</keyword>
<reference key="1">
    <citation type="submission" date="2004-11" db="EMBL/GenBank/DDBJ databases">
        <authorList>
            <consortium name="The German cDNA consortium"/>
        </authorList>
    </citation>
    <scope>NUCLEOTIDE SEQUENCE [LARGE SCALE MRNA]</scope>
    <source>
        <tissue>Brain cortex</tissue>
    </source>
</reference>
<name>CNPD1_PONAB</name>
<organism>
    <name type="scientific">Pongo abelii</name>
    <name type="common">Sumatran orangutan</name>
    <name type="synonym">Pongo pygmaeus abelii</name>
    <dbReference type="NCBI Taxonomy" id="9601"/>
    <lineage>
        <taxon>Eukaryota</taxon>
        <taxon>Metazoa</taxon>
        <taxon>Chordata</taxon>
        <taxon>Craniata</taxon>
        <taxon>Vertebrata</taxon>
        <taxon>Euteleostomi</taxon>
        <taxon>Mammalia</taxon>
        <taxon>Eutheria</taxon>
        <taxon>Euarchontoglires</taxon>
        <taxon>Primates</taxon>
        <taxon>Haplorrhini</taxon>
        <taxon>Catarrhini</taxon>
        <taxon>Hominidae</taxon>
        <taxon>Pongo</taxon>
    </lineage>
</organism>
<proteinExistence type="evidence at transcript level"/>
<evidence type="ECO:0000255" key="1"/>
<evidence type="ECO:0000305" key="2"/>
<dbReference type="EMBL" id="CR861146">
    <property type="protein sequence ID" value="CAH93221.1"/>
    <property type="molecule type" value="mRNA"/>
</dbReference>
<dbReference type="RefSeq" id="NP_001126894.1">
    <property type="nucleotide sequence ID" value="NM_001133422.1"/>
</dbReference>
<dbReference type="RefSeq" id="XP_024098756.2">
    <property type="nucleotide sequence ID" value="XM_024242988.3"/>
</dbReference>
<dbReference type="RefSeq" id="XP_054404740.1">
    <property type="nucleotide sequence ID" value="XM_054548765.2"/>
</dbReference>
<dbReference type="RefSeq" id="XP_054404741.1">
    <property type="nucleotide sequence ID" value="XM_054548766.2"/>
</dbReference>
<dbReference type="SMR" id="Q5R4U5"/>
<dbReference type="FunCoup" id="Q5R4U5">
    <property type="interactions" value="945"/>
</dbReference>
<dbReference type="STRING" id="9601.ENSPPYP00000014744"/>
<dbReference type="GeneID" id="100173909"/>
<dbReference type="KEGG" id="pon:100173909"/>
<dbReference type="CTD" id="27013"/>
<dbReference type="eggNOG" id="KOG1674">
    <property type="taxonomic scope" value="Eukaryota"/>
</dbReference>
<dbReference type="InParanoid" id="Q5R4U5"/>
<dbReference type="OrthoDB" id="244495at2759"/>
<dbReference type="Proteomes" id="UP000001595">
    <property type="component" value="Unplaced"/>
</dbReference>
<dbReference type="GO" id="GO:0000307">
    <property type="term" value="C:cyclin-dependent protein kinase holoenzyme complex"/>
    <property type="evidence" value="ECO:0007669"/>
    <property type="project" value="TreeGrafter"/>
</dbReference>
<dbReference type="GO" id="GO:0016020">
    <property type="term" value="C:membrane"/>
    <property type="evidence" value="ECO:0007669"/>
    <property type="project" value="UniProtKB-SubCell"/>
</dbReference>
<dbReference type="GO" id="GO:0005634">
    <property type="term" value="C:nucleus"/>
    <property type="evidence" value="ECO:0007669"/>
    <property type="project" value="TreeGrafter"/>
</dbReference>
<dbReference type="GO" id="GO:0016538">
    <property type="term" value="F:cyclin-dependent protein serine/threonine kinase regulator activity"/>
    <property type="evidence" value="ECO:0007669"/>
    <property type="project" value="TreeGrafter"/>
</dbReference>
<dbReference type="GO" id="GO:0019901">
    <property type="term" value="F:protein kinase binding"/>
    <property type="evidence" value="ECO:0007669"/>
    <property type="project" value="InterPro"/>
</dbReference>
<dbReference type="CDD" id="cd20557">
    <property type="entry name" value="CYCLIN_ScPCL1-like"/>
    <property type="match status" value="1"/>
</dbReference>
<dbReference type="Gene3D" id="1.10.472.10">
    <property type="entry name" value="Cyclin-like"/>
    <property type="match status" value="1"/>
</dbReference>
<dbReference type="InterPro" id="IPR013922">
    <property type="entry name" value="Cyclin_PHO80-like"/>
</dbReference>
<dbReference type="PANTHER" id="PTHR15615">
    <property type="match status" value="1"/>
</dbReference>
<dbReference type="PANTHER" id="PTHR15615:SF108">
    <property type="entry name" value="PROTEIN CNPPD1"/>
    <property type="match status" value="1"/>
</dbReference>
<dbReference type="Pfam" id="PF08613">
    <property type="entry name" value="Cyclin"/>
    <property type="match status" value="1"/>
</dbReference>
<comment type="subcellular location">
    <subcellularLocation>
        <location evidence="2">Membrane</location>
        <topology evidence="2">Single-pass membrane protein</topology>
    </subcellularLocation>
</comment>
<comment type="similarity">
    <text evidence="2">Belongs to the CNPPD1 family.</text>
</comment>
<protein>
    <recommendedName>
        <fullName>Protein CNPPD1</fullName>
    </recommendedName>
</protein>
<accession>Q5R4U5</accession>
<feature type="chain" id="PRO_0000089354" description="Protein CNPPD1">
    <location>
        <begin position="1"/>
        <end position="410"/>
    </location>
</feature>
<feature type="transmembrane region" description="Helical" evidence="1">
    <location>
        <begin position="233"/>
        <end position="253"/>
    </location>
</feature>